<accession>Q6PHG4</accession>
<accession>A8WGN4</accession>
<keyword id="KW-0004">4Fe-4S</keyword>
<keyword id="KW-0408">Iron</keyword>
<keyword id="KW-0411">Iron-sulfur</keyword>
<keyword id="KW-0479">Metal-binding</keyword>
<keyword id="KW-0496">Mitochondrion</keyword>
<keyword id="KW-1185">Reference proteome</keyword>
<keyword id="KW-0949">S-adenosyl-L-methionine</keyword>
<keyword id="KW-0808">Transferase</keyword>
<keyword id="KW-0809">Transit peptide</keyword>
<organism>
    <name type="scientific">Danio rerio</name>
    <name type="common">Zebrafish</name>
    <name type="synonym">Brachydanio rerio</name>
    <dbReference type="NCBI Taxonomy" id="7955"/>
    <lineage>
        <taxon>Eukaryota</taxon>
        <taxon>Metazoa</taxon>
        <taxon>Chordata</taxon>
        <taxon>Craniata</taxon>
        <taxon>Vertebrata</taxon>
        <taxon>Euteleostomi</taxon>
        <taxon>Actinopterygii</taxon>
        <taxon>Neopterygii</taxon>
        <taxon>Teleostei</taxon>
        <taxon>Ostariophysi</taxon>
        <taxon>Cypriniformes</taxon>
        <taxon>Danionidae</taxon>
        <taxon>Danioninae</taxon>
        <taxon>Danio</taxon>
    </lineage>
</organism>
<comment type="function">
    <text evidence="1">Catalyzes the radical-mediated insertion of two sulfur atoms into the C-6 and C-8 positions of the octanoyl moiety bound to the lipoyl domains of lipoate-dependent enzymes, thereby converting the octanoylated domains into lipoylated derivatives.</text>
</comment>
<comment type="catalytic activity">
    <reaction evidence="1">
        <text>[[Fe-S] cluster scaffold protein carrying a second [4Fe-4S](2+) cluster] + N(6)-octanoyl-L-lysyl-[protein] + 2 oxidized [2Fe-2S]-[ferredoxin] + 2 S-adenosyl-L-methionine + 4 H(+) = [[Fe-S] cluster scaffold protein] + N(6)-[(R)-dihydrolipoyl]-L-lysyl-[protein] + 4 Fe(3+) + 2 hydrogen sulfide + 2 5'-deoxyadenosine + 2 L-methionine + 2 reduced [2Fe-2S]-[ferredoxin]</text>
        <dbReference type="Rhea" id="RHEA:16585"/>
        <dbReference type="Rhea" id="RHEA-COMP:9928"/>
        <dbReference type="Rhea" id="RHEA-COMP:10000"/>
        <dbReference type="Rhea" id="RHEA-COMP:10001"/>
        <dbReference type="Rhea" id="RHEA-COMP:10475"/>
        <dbReference type="Rhea" id="RHEA-COMP:14568"/>
        <dbReference type="Rhea" id="RHEA-COMP:14569"/>
        <dbReference type="ChEBI" id="CHEBI:15378"/>
        <dbReference type="ChEBI" id="CHEBI:17319"/>
        <dbReference type="ChEBI" id="CHEBI:29034"/>
        <dbReference type="ChEBI" id="CHEBI:29919"/>
        <dbReference type="ChEBI" id="CHEBI:33722"/>
        <dbReference type="ChEBI" id="CHEBI:33737"/>
        <dbReference type="ChEBI" id="CHEBI:33738"/>
        <dbReference type="ChEBI" id="CHEBI:57844"/>
        <dbReference type="ChEBI" id="CHEBI:59789"/>
        <dbReference type="ChEBI" id="CHEBI:78809"/>
        <dbReference type="ChEBI" id="CHEBI:83100"/>
        <dbReference type="EC" id="2.8.1.8"/>
    </reaction>
</comment>
<comment type="cofactor">
    <cofactor evidence="1">
        <name>[4Fe-4S] cluster</name>
        <dbReference type="ChEBI" id="CHEBI:49883"/>
    </cofactor>
    <text evidence="1">Binds 2 [4Fe-4S] clusters per subunit. One cluster is coordinated with 3 cysteines and an exchangeable S-adenosyl-L-methionine.</text>
</comment>
<comment type="pathway">
    <text evidence="1">Protein modification; protein lipoylation via endogenous pathway; protein N(6)-(lipoyl)lysine from octanoyl-[acyl-carrier-protein]: step 2/2.</text>
</comment>
<comment type="subcellular location">
    <subcellularLocation>
        <location evidence="1">Mitochondrion</location>
    </subcellularLocation>
</comment>
<comment type="similarity">
    <text evidence="1">Belongs to the radical SAM superfamily. Lipoyl synthase family.</text>
</comment>
<evidence type="ECO:0000255" key="1">
    <source>
        <dbReference type="HAMAP-Rule" id="MF_03123"/>
    </source>
</evidence>
<evidence type="ECO:0000255" key="2">
    <source>
        <dbReference type="PROSITE-ProRule" id="PRU01266"/>
    </source>
</evidence>
<evidence type="ECO:0000256" key="3">
    <source>
        <dbReference type="SAM" id="MobiDB-lite"/>
    </source>
</evidence>
<evidence type="ECO:0000305" key="4"/>
<proteinExistence type="evidence at transcript level"/>
<reference key="1">
    <citation type="submission" date="2003-08" db="EMBL/GenBank/DDBJ databases">
        <authorList>
            <consortium name="NIH - Zebrafish Gene Collection (ZGC) project"/>
        </authorList>
    </citation>
    <scope>NUCLEOTIDE SEQUENCE [LARGE SCALE MRNA]</scope>
    <source>
        <tissue>Embryo</tissue>
        <tissue>Kidney</tissue>
    </source>
</reference>
<name>LIAS_DANRE</name>
<dbReference type="EC" id="2.8.1.8" evidence="1"/>
<dbReference type="EMBL" id="BC154781">
    <property type="protein sequence ID" value="AAI54782.1"/>
    <property type="molecule type" value="mRNA"/>
</dbReference>
<dbReference type="EMBL" id="BC056561">
    <property type="protein sequence ID" value="AAH56561.1"/>
    <property type="molecule type" value="mRNA"/>
</dbReference>
<dbReference type="RefSeq" id="NP_001103871.1">
    <property type="nucleotide sequence ID" value="NM_001110401.1"/>
</dbReference>
<dbReference type="SMR" id="Q6PHG4"/>
<dbReference type="FunCoup" id="Q6PHG4">
    <property type="interactions" value="1809"/>
</dbReference>
<dbReference type="STRING" id="7955.ENSDARP00000035286"/>
<dbReference type="PaxDb" id="7955-ENSDARP00000035286"/>
<dbReference type="GeneID" id="393528"/>
<dbReference type="KEGG" id="dre:393528"/>
<dbReference type="AGR" id="ZFIN:ZDB-GENE-040426-1528"/>
<dbReference type="CTD" id="11019"/>
<dbReference type="ZFIN" id="ZDB-GENE-040426-1528">
    <property type="gene designation" value="lias"/>
</dbReference>
<dbReference type="eggNOG" id="KOG2672">
    <property type="taxonomic scope" value="Eukaryota"/>
</dbReference>
<dbReference type="InParanoid" id="Q6PHG4"/>
<dbReference type="OrthoDB" id="3231at2759"/>
<dbReference type="PhylomeDB" id="Q6PHG4"/>
<dbReference type="TreeFam" id="TF300817"/>
<dbReference type="Reactome" id="R-DRE-9857492">
    <property type="pathway name" value="Protein lipoylation"/>
</dbReference>
<dbReference type="UniPathway" id="UPA00538">
    <property type="reaction ID" value="UER00593"/>
</dbReference>
<dbReference type="PRO" id="PR:Q6PHG4"/>
<dbReference type="Proteomes" id="UP000000437">
    <property type="component" value="Alternate scaffold 1"/>
</dbReference>
<dbReference type="Proteomes" id="UP000000437">
    <property type="component" value="Chromosome 1"/>
</dbReference>
<dbReference type="GO" id="GO:0005739">
    <property type="term" value="C:mitochondrion"/>
    <property type="evidence" value="ECO:0000318"/>
    <property type="project" value="GO_Central"/>
</dbReference>
<dbReference type="GO" id="GO:0051539">
    <property type="term" value="F:4 iron, 4 sulfur cluster binding"/>
    <property type="evidence" value="ECO:0007669"/>
    <property type="project" value="UniProtKB-UniRule"/>
</dbReference>
<dbReference type="GO" id="GO:0016992">
    <property type="term" value="F:lipoate synthase activity"/>
    <property type="evidence" value="ECO:0000318"/>
    <property type="project" value="GO_Central"/>
</dbReference>
<dbReference type="GO" id="GO:0046872">
    <property type="term" value="F:metal ion binding"/>
    <property type="evidence" value="ECO:0007669"/>
    <property type="project" value="UniProtKB-KW"/>
</dbReference>
<dbReference type="GO" id="GO:0009107">
    <property type="term" value="P:lipoate biosynthetic process"/>
    <property type="evidence" value="ECO:0000318"/>
    <property type="project" value="GO_Central"/>
</dbReference>
<dbReference type="CDD" id="cd01335">
    <property type="entry name" value="Radical_SAM"/>
    <property type="match status" value="1"/>
</dbReference>
<dbReference type="FunFam" id="3.20.20.70:FF:000036">
    <property type="entry name" value="Lipoyl synthase, mitochondrial"/>
    <property type="match status" value="1"/>
</dbReference>
<dbReference type="Gene3D" id="3.20.20.70">
    <property type="entry name" value="Aldolase class I"/>
    <property type="match status" value="1"/>
</dbReference>
<dbReference type="HAMAP" id="MF_00206">
    <property type="entry name" value="Lipoyl_synth"/>
    <property type="match status" value="1"/>
</dbReference>
<dbReference type="InterPro" id="IPR013785">
    <property type="entry name" value="Aldolase_TIM"/>
</dbReference>
<dbReference type="InterPro" id="IPR006638">
    <property type="entry name" value="Elp3/MiaA/NifB-like_rSAM"/>
</dbReference>
<dbReference type="InterPro" id="IPR031691">
    <property type="entry name" value="LIAS_N"/>
</dbReference>
<dbReference type="InterPro" id="IPR003698">
    <property type="entry name" value="Lipoyl_synth"/>
</dbReference>
<dbReference type="InterPro" id="IPR007197">
    <property type="entry name" value="rSAM"/>
</dbReference>
<dbReference type="NCBIfam" id="TIGR00510">
    <property type="entry name" value="lipA"/>
    <property type="match status" value="1"/>
</dbReference>
<dbReference type="NCBIfam" id="NF004019">
    <property type="entry name" value="PRK05481.1"/>
    <property type="match status" value="1"/>
</dbReference>
<dbReference type="NCBIfam" id="NF009544">
    <property type="entry name" value="PRK12928.1"/>
    <property type="match status" value="1"/>
</dbReference>
<dbReference type="PANTHER" id="PTHR10949">
    <property type="entry name" value="LIPOYL SYNTHASE"/>
    <property type="match status" value="1"/>
</dbReference>
<dbReference type="PANTHER" id="PTHR10949:SF0">
    <property type="entry name" value="LIPOYL SYNTHASE, MITOCHONDRIAL"/>
    <property type="match status" value="1"/>
</dbReference>
<dbReference type="Pfam" id="PF16881">
    <property type="entry name" value="LIAS_N"/>
    <property type="match status" value="1"/>
</dbReference>
<dbReference type="Pfam" id="PF04055">
    <property type="entry name" value="Radical_SAM"/>
    <property type="match status" value="1"/>
</dbReference>
<dbReference type="SFLD" id="SFLDF00271">
    <property type="entry name" value="lipoyl_synthase"/>
    <property type="match status" value="1"/>
</dbReference>
<dbReference type="SFLD" id="SFLDG01058">
    <property type="entry name" value="lipoyl_synthase_like"/>
    <property type="match status" value="1"/>
</dbReference>
<dbReference type="SMART" id="SM00729">
    <property type="entry name" value="Elp3"/>
    <property type="match status" value="1"/>
</dbReference>
<dbReference type="SUPFAM" id="SSF102114">
    <property type="entry name" value="Radical SAM enzymes"/>
    <property type="match status" value="1"/>
</dbReference>
<dbReference type="PROSITE" id="PS51918">
    <property type="entry name" value="RADICAL_SAM"/>
    <property type="match status" value="1"/>
</dbReference>
<protein>
    <recommendedName>
        <fullName evidence="1">Lipoyl synthase, mitochondrial</fullName>
        <ecNumber evidence="1">2.8.1.8</ecNumber>
    </recommendedName>
    <alternativeName>
        <fullName evidence="1">Lipoate synthase</fullName>
        <shortName evidence="1">LS</shortName>
        <shortName evidence="1">Lip-syn</shortName>
    </alternativeName>
    <alternativeName>
        <fullName evidence="1">Lipoic acid synthase</fullName>
    </alternativeName>
</protein>
<feature type="transit peptide" description="Mitochondrion" evidence="1">
    <location>
        <begin position="1"/>
        <end position="14"/>
    </location>
</feature>
<feature type="chain" id="PRO_0000398211" description="Lipoyl synthase, mitochondrial">
    <location>
        <begin position="15"/>
        <end position="399"/>
    </location>
</feature>
<feature type="domain" description="Radical SAM core" evidence="2">
    <location>
        <begin position="144"/>
        <end position="363"/>
    </location>
</feature>
<feature type="region of interest" description="Disordered" evidence="3">
    <location>
        <begin position="39"/>
        <end position="60"/>
    </location>
</feature>
<feature type="compositionally biased region" description="Low complexity" evidence="3">
    <location>
        <begin position="39"/>
        <end position="52"/>
    </location>
</feature>
<feature type="binding site" evidence="1">
    <location>
        <position position="128"/>
    </location>
    <ligand>
        <name>[4Fe-4S] cluster</name>
        <dbReference type="ChEBI" id="CHEBI:49883"/>
        <label>1</label>
    </ligand>
</feature>
<feature type="binding site" evidence="1">
    <location>
        <position position="133"/>
    </location>
    <ligand>
        <name>[4Fe-4S] cluster</name>
        <dbReference type="ChEBI" id="CHEBI:49883"/>
        <label>1</label>
    </ligand>
</feature>
<feature type="binding site" evidence="1">
    <location>
        <position position="139"/>
    </location>
    <ligand>
        <name>[4Fe-4S] cluster</name>
        <dbReference type="ChEBI" id="CHEBI:49883"/>
        <label>1</label>
    </ligand>
</feature>
<feature type="binding site" evidence="1">
    <location>
        <position position="159"/>
    </location>
    <ligand>
        <name>[4Fe-4S] cluster</name>
        <dbReference type="ChEBI" id="CHEBI:49883"/>
        <label>2</label>
        <note>4Fe-4S-S-AdoMet</note>
    </ligand>
</feature>
<feature type="binding site" evidence="1">
    <location>
        <position position="163"/>
    </location>
    <ligand>
        <name>[4Fe-4S] cluster</name>
        <dbReference type="ChEBI" id="CHEBI:49883"/>
        <label>2</label>
        <note>4Fe-4S-S-AdoMet</note>
    </ligand>
</feature>
<feature type="binding site" evidence="1">
    <location>
        <position position="166"/>
    </location>
    <ligand>
        <name>[4Fe-4S] cluster</name>
        <dbReference type="ChEBI" id="CHEBI:49883"/>
        <label>2</label>
        <note>4Fe-4S-S-AdoMet</note>
    </ligand>
</feature>
<feature type="binding site" evidence="1">
    <location>
        <position position="374"/>
    </location>
    <ligand>
        <name>[4Fe-4S] cluster</name>
        <dbReference type="ChEBI" id="CHEBI:49883"/>
        <label>1</label>
    </ligand>
</feature>
<feature type="sequence conflict" description="In Ref. 1; AAI54782." evidence="4" ref="1">
    <location>
        <begin position="50"/>
        <end position="51"/>
    </location>
</feature>
<sequence>MALISRSCGAASRYSSSHLFLPSKGAEAANVYCNRLSTAASTSSSSSPSPSTHNDRKKDLREDGLNLQDFISGELSEKSKWEEYRGNLKREKGERLRLPPWLKTEIPIGKNYNKLKNTLRELNLHTVCEEARCPNIGECWGGGEYATATATIMLMGDTCTRGCRFCSVKTARRPPPLDPDEPYNTAKAIAAWGLDYVVLTSVDRDDIPDGGAEHFAKTVSNIKERNSKILVECLTPDFRGDLAAVEKIALSGLDVYAHNVETVRELQRHVRDPRANFDQSLSVLRHAKKVKSSVLTKTSIMLGLGETDAQIQATLTELRDSGVDCLTLGQYMQPTKRHLKVEEYVTPEKFAFWEKVGQEMGFIYTASGPLVRSSYKAGEFFLKNLLEKRKTEETTATAE</sequence>
<gene>
    <name type="primary">lias</name>
    <name type="ORF">zgc:66080</name>
</gene>